<sequence length="67" mass="7400">MAVPKRKMSRANTRARRAQWKATAPNLVKTIENGQVTYSLPHQAKVVTDSAGTALFLEYKGRKVADA</sequence>
<protein>
    <recommendedName>
        <fullName evidence="1">Large ribosomal subunit protein bL32</fullName>
    </recommendedName>
    <alternativeName>
        <fullName evidence="3">50S ribosomal protein L32</fullName>
    </alternativeName>
</protein>
<keyword id="KW-0687">Ribonucleoprotein</keyword>
<keyword id="KW-0689">Ribosomal protein</keyword>
<organism>
    <name type="scientific">Paenarthrobacter aurescens (strain TC1)</name>
    <dbReference type="NCBI Taxonomy" id="290340"/>
    <lineage>
        <taxon>Bacteria</taxon>
        <taxon>Bacillati</taxon>
        <taxon>Actinomycetota</taxon>
        <taxon>Actinomycetes</taxon>
        <taxon>Micrococcales</taxon>
        <taxon>Micrococcaceae</taxon>
        <taxon>Paenarthrobacter</taxon>
    </lineage>
</organism>
<feature type="chain" id="PRO_0000296421" description="Large ribosomal subunit protein bL32">
    <location>
        <begin position="1"/>
        <end position="67"/>
    </location>
</feature>
<feature type="region of interest" description="Disordered" evidence="2">
    <location>
        <begin position="1"/>
        <end position="20"/>
    </location>
</feature>
<feature type="compositionally biased region" description="Basic residues" evidence="2">
    <location>
        <begin position="1"/>
        <end position="19"/>
    </location>
</feature>
<dbReference type="EMBL" id="CP000474">
    <property type="protein sequence ID" value="ABM08994.1"/>
    <property type="molecule type" value="Genomic_DNA"/>
</dbReference>
<dbReference type="RefSeq" id="WP_011775139.1">
    <property type="nucleotide sequence ID" value="NC_008711.1"/>
</dbReference>
<dbReference type="SMR" id="A1R7I5"/>
<dbReference type="STRING" id="290340.AAur_2471"/>
<dbReference type="GeneID" id="97301325"/>
<dbReference type="KEGG" id="aau:AAur_2471"/>
<dbReference type="eggNOG" id="COG0333">
    <property type="taxonomic scope" value="Bacteria"/>
</dbReference>
<dbReference type="HOGENOM" id="CLU_2805252_0_0_11"/>
<dbReference type="OrthoDB" id="9807363at2"/>
<dbReference type="Proteomes" id="UP000000637">
    <property type="component" value="Chromosome"/>
</dbReference>
<dbReference type="GO" id="GO:0015934">
    <property type="term" value="C:large ribosomal subunit"/>
    <property type="evidence" value="ECO:0007669"/>
    <property type="project" value="InterPro"/>
</dbReference>
<dbReference type="GO" id="GO:0003735">
    <property type="term" value="F:structural constituent of ribosome"/>
    <property type="evidence" value="ECO:0007669"/>
    <property type="project" value="InterPro"/>
</dbReference>
<dbReference type="GO" id="GO:0006412">
    <property type="term" value="P:translation"/>
    <property type="evidence" value="ECO:0007669"/>
    <property type="project" value="UniProtKB-UniRule"/>
</dbReference>
<dbReference type="HAMAP" id="MF_00340">
    <property type="entry name" value="Ribosomal_bL32"/>
    <property type="match status" value="1"/>
</dbReference>
<dbReference type="InterPro" id="IPR002677">
    <property type="entry name" value="Ribosomal_bL32"/>
</dbReference>
<dbReference type="InterPro" id="IPR011332">
    <property type="entry name" value="Ribosomal_zn-bd"/>
</dbReference>
<dbReference type="NCBIfam" id="TIGR01031">
    <property type="entry name" value="rpmF_bact"/>
    <property type="match status" value="1"/>
</dbReference>
<dbReference type="Pfam" id="PF01783">
    <property type="entry name" value="Ribosomal_L32p"/>
    <property type="match status" value="1"/>
</dbReference>
<dbReference type="SUPFAM" id="SSF57829">
    <property type="entry name" value="Zn-binding ribosomal proteins"/>
    <property type="match status" value="1"/>
</dbReference>
<name>RL32_PAEAT</name>
<comment type="similarity">
    <text evidence="1">Belongs to the bacterial ribosomal protein bL32 family.</text>
</comment>
<proteinExistence type="inferred from homology"/>
<accession>A1R7I5</accession>
<reference key="1">
    <citation type="journal article" date="2006" name="PLoS Genet.">
        <title>Secrets of soil survival revealed by the genome sequence of Arthrobacter aurescens TC1.</title>
        <authorList>
            <person name="Mongodin E.F."/>
            <person name="Shapir N."/>
            <person name="Daugherty S.C."/>
            <person name="DeBoy R.T."/>
            <person name="Emerson J.B."/>
            <person name="Shvartzbeyn A."/>
            <person name="Radune D."/>
            <person name="Vamathevan J."/>
            <person name="Riggs F."/>
            <person name="Grinberg V."/>
            <person name="Khouri H.M."/>
            <person name="Wackett L.P."/>
            <person name="Nelson K.E."/>
            <person name="Sadowsky M.J."/>
        </authorList>
    </citation>
    <scope>NUCLEOTIDE SEQUENCE [LARGE SCALE GENOMIC DNA]</scope>
    <source>
        <strain>TC1</strain>
    </source>
</reference>
<gene>
    <name evidence="1" type="primary">rpmF</name>
    <name type="ordered locus">AAur_2471</name>
</gene>
<evidence type="ECO:0000255" key="1">
    <source>
        <dbReference type="HAMAP-Rule" id="MF_00340"/>
    </source>
</evidence>
<evidence type="ECO:0000256" key="2">
    <source>
        <dbReference type="SAM" id="MobiDB-lite"/>
    </source>
</evidence>
<evidence type="ECO:0000305" key="3"/>